<name>CPCT_NOSS1</name>
<sequence length="199" mass="22870">MTHSTDIATLARWMAADFSNQAQAFENPPFYAHIRVCMRPLPWEVLSGVGFFVEQAYDYMLNDPYRLRVLKLMIVGDRIHIENYTVKQEENFYGASRDLNRLQTLTSESLEKLPGCNMIVEWTGNSFKGTVEPGKGCIVVRKGQKTYLDSEFEINEEKFISLDRGRDLETDAHIWGSVAGPFYFVRLHNFADEVKISAE</sequence>
<accession>Q8YLF9</accession>
<protein>
    <recommendedName>
        <fullName>Phycocyanobilin lyase CpcT</fullName>
        <ecNumber>4.-.-.-</ecNumber>
    </recommendedName>
</protein>
<feature type="chain" id="PRO_0000403160" description="Phycocyanobilin lyase CpcT">
    <location>
        <begin position="1"/>
        <end position="199"/>
    </location>
</feature>
<feature type="helix" evidence="3">
    <location>
        <begin position="7"/>
        <end position="14"/>
    </location>
</feature>
<feature type="strand" evidence="3">
    <location>
        <begin position="16"/>
        <end position="19"/>
    </location>
</feature>
<feature type="helix" evidence="3">
    <location>
        <begin position="21"/>
        <end position="26"/>
    </location>
</feature>
<feature type="strand" evidence="3">
    <location>
        <begin position="34"/>
        <end position="40"/>
    </location>
</feature>
<feature type="turn" evidence="3">
    <location>
        <begin position="43"/>
        <end position="47"/>
    </location>
</feature>
<feature type="strand" evidence="3">
    <location>
        <begin position="48"/>
        <end position="57"/>
    </location>
</feature>
<feature type="strand" evidence="3">
    <location>
        <begin position="65"/>
        <end position="75"/>
    </location>
</feature>
<feature type="strand" evidence="3">
    <location>
        <begin position="78"/>
        <end position="86"/>
    </location>
</feature>
<feature type="helix" evidence="3">
    <location>
        <begin position="89"/>
        <end position="92"/>
    </location>
</feature>
<feature type="helix" evidence="3">
    <location>
        <begin position="95"/>
        <end position="97"/>
    </location>
</feature>
<feature type="helix" evidence="3">
    <location>
        <begin position="99"/>
        <end position="102"/>
    </location>
</feature>
<feature type="helix" evidence="3">
    <location>
        <begin position="107"/>
        <end position="109"/>
    </location>
</feature>
<feature type="strand" evidence="3">
    <location>
        <begin position="110"/>
        <end position="112"/>
    </location>
</feature>
<feature type="strand" evidence="3">
    <location>
        <begin position="118"/>
        <end position="122"/>
    </location>
</feature>
<feature type="strand" evidence="3">
    <location>
        <begin position="124"/>
        <end position="131"/>
    </location>
</feature>
<feature type="strand" evidence="3">
    <location>
        <begin position="133"/>
        <end position="135"/>
    </location>
</feature>
<feature type="strand" evidence="3">
    <location>
        <begin position="138"/>
        <end position="141"/>
    </location>
</feature>
<feature type="strand" evidence="3">
    <location>
        <begin position="144"/>
        <end position="148"/>
    </location>
</feature>
<feature type="strand" evidence="3">
    <location>
        <begin position="151"/>
        <end position="154"/>
    </location>
</feature>
<feature type="strand" evidence="3">
    <location>
        <begin position="159"/>
        <end position="162"/>
    </location>
</feature>
<feature type="strand" evidence="3">
    <location>
        <begin position="164"/>
        <end position="167"/>
    </location>
</feature>
<feature type="turn" evidence="3">
    <location>
        <begin position="168"/>
        <end position="170"/>
    </location>
</feature>
<feature type="strand" evidence="3">
    <location>
        <begin position="173"/>
        <end position="176"/>
    </location>
</feature>
<feature type="strand" evidence="3">
    <location>
        <begin position="178"/>
        <end position="180"/>
    </location>
</feature>
<feature type="strand" evidence="3">
    <location>
        <begin position="182"/>
        <end position="189"/>
    </location>
</feature>
<feature type="helix" evidence="3">
    <location>
        <begin position="191"/>
        <end position="193"/>
    </location>
</feature>
<keyword id="KW-0002">3D-structure</keyword>
<keyword id="KW-0456">Lyase</keyword>
<keyword id="KW-1185">Reference proteome</keyword>
<organism>
    <name type="scientific">Nostoc sp. (strain PCC 7120 / SAG 25.82 / UTEX 2576)</name>
    <dbReference type="NCBI Taxonomy" id="103690"/>
    <lineage>
        <taxon>Bacteria</taxon>
        <taxon>Bacillati</taxon>
        <taxon>Cyanobacteriota</taxon>
        <taxon>Cyanophyceae</taxon>
        <taxon>Nostocales</taxon>
        <taxon>Nostocaceae</taxon>
        <taxon>Nostoc</taxon>
    </lineage>
</organism>
<comment type="function">
    <text evidence="1">Catalyzes the site-selective attachment of phycocyanobilin (PCB) to 'Cys-154' of C-phycocyanin subunit beta (CpcB) and to 'Cys-153' of phycoerythrocyanin subunit beta (PecB). Does not have chromophore lyase activity for ApcA1, ApcA2, ApcB, ApcD, ApcF or PecA.</text>
</comment>
<comment type="induction">
    <text evidence="1">Constitutively expressed.</text>
</comment>
<comment type="similarity">
    <text evidence="2">Belongs to the CpcT/CpeT biliprotein lyase family.</text>
</comment>
<dbReference type="EC" id="4.-.-.-"/>
<dbReference type="EMBL" id="BA000019">
    <property type="protein sequence ID" value="BAB77038.1"/>
    <property type="molecule type" value="Genomic_DNA"/>
</dbReference>
<dbReference type="PIR" id="AC2473">
    <property type="entry name" value="AC2473"/>
</dbReference>
<dbReference type="RefSeq" id="WP_010999463.1">
    <property type="nucleotide sequence ID" value="NZ_RSCN01000005.1"/>
</dbReference>
<dbReference type="PDB" id="4O4O">
    <property type="method" value="X-ray"/>
    <property type="resolution" value="1.95 A"/>
    <property type="chains" value="A/B=1-199"/>
</dbReference>
<dbReference type="PDB" id="4O4S">
    <property type="method" value="X-ray"/>
    <property type="resolution" value="2.50 A"/>
    <property type="chains" value="A/B/C/D/E/F/G/H/I/J/K/L=1-199"/>
</dbReference>
<dbReference type="PDBsum" id="4O4O"/>
<dbReference type="PDBsum" id="4O4S"/>
<dbReference type="SMR" id="Q8YLF9"/>
<dbReference type="STRING" id="103690.gene:10497401"/>
<dbReference type="KEGG" id="ana:all5339"/>
<dbReference type="eggNOG" id="ENOG502Z877">
    <property type="taxonomic scope" value="Bacteria"/>
</dbReference>
<dbReference type="OrthoDB" id="509174at2"/>
<dbReference type="BioCyc" id="MetaCyc:MONOMER-18987"/>
<dbReference type="BRENDA" id="4.4.1.30">
    <property type="organism ID" value="4371"/>
</dbReference>
<dbReference type="EvolutionaryTrace" id="Q8YLF9"/>
<dbReference type="Proteomes" id="UP000002483">
    <property type="component" value="Chromosome"/>
</dbReference>
<dbReference type="GO" id="GO:0016829">
    <property type="term" value="F:lyase activity"/>
    <property type="evidence" value="ECO:0007669"/>
    <property type="project" value="UniProtKB-KW"/>
</dbReference>
<dbReference type="GO" id="GO:0017009">
    <property type="term" value="P:protein-phycocyanobilin linkage"/>
    <property type="evidence" value="ECO:0000314"/>
    <property type="project" value="UniProtKB"/>
</dbReference>
<dbReference type="CDD" id="cd16338">
    <property type="entry name" value="CpcT"/>
    <property type="match status" value="1"/>
</dbReference>
<dbReference type="FunFam" id="2.40.128.590:FF:000002">
    <property type="entry name" value="Phycocyanobilin lyase CpcT"/>
    <property type="match status" value="1"/>
</dbReference>
<dbReference type="Gene3D" id="2.40.128.590">
    <property type="entry name" value="CpcT/CpeT domain"/>
    <property type="match status" value="1"/>
</dbReference>
<dbReference type="HAMAP" id="MF_01460">
    <property type="entry name" value="Chrphore_lyase_CpxT"/>
    <property type="match status" value="1"/>
</dbReference>
<dbReference type="InterPro" id="IPR010404">
    <property type="entry name" value="CpcT/CpeT"/>
</dbReference>
<dbReference type="InterPro" id="IPR038672">
    <property type="entry name" value="CpcT/CpeT_sf"/>
</dbReference>
<dbReference type="PANTHER" id="PTHR35137">
    <property type="entry name" value="CHROMOPHORE LYASE CRL, CHLOROPLASTIC"/>
    <property type="match status" value="1"/>
</dbReference>
<dbReference type="PANTHER" id="PTHR35137:SF1">
    <property type="entry name" value="CHROMOPHORE LYASE CRL, CHLOROPLASTIC"/>
    <property type="match status" value="1"/>
</dbReference>
<dbReference type="Pfam" id="PF06206">
    <property type="entry name" value="CpeT"/>
    <property type="match status" value="1"/>
</dbReference>
<proteinExistence type="evidence at protein level"/>
<reference key="1">
    <citation type="journal article" date="2001" name="DNA Res.">
        <title>Complete genomic sequence of the filamentous nitrogen-fixing cyanobacterium Anabaena sp. strain PCC 7120.</title>
        <authorList>
            <person name="Kaneko T."/>
            <person name="Nakamura Y."/>
            <person name="Wolk C.P."/>
            <person name="Kuritz T."/>
            <person name="Sasamoto S."/>
            <person name="Watanabe A."/>
            <person name="Iriguchi M."/>
            <person name="Ishikawa A."/>
            <person name="Kawashima K."/>
            <person name="Kimura T."/>
            <person name="Kishida Y."/>
            <person name="Kohara M."/>
            <person name="Matsumoto M."/>
            <person name="Matsuno A."/>
            <person name="Muraki A."/>
            <person name="Nakazaki N."/>
            <person name="Shimpo S."/>
            <person name="Sugimoto M."/>
            <person name="Takazawa M."/>
            <person name="Yamada M."/>
            <person name="Yasuda M."/>
            <person name="Tabata S."/>
        </authorList>
    </citation>
    <scope>NUCLEOTIDE SEQUENCE [LARGE SCALE GENOMIC DNA]</scope>
    <source>
        <strain>PCC 7120 / SAG 25.82 / UTEX 2576</strain>
    </source>
</reference>
<reference key="2">
    <citation type="journal article" date="2007" name="J. Biol. Chem.">
        <title>Lyase activities of CpcS- and CpcT-like proteins from Nostoc PCC7120 and sequential reconstitution of binding sites of phycoerythrocyanin and phycocyanin beta-subunits.</title>
        <authorList>
            <person name="Zhao K.H."/>
            <person name="Zhang J."/>
            <person name="Tu J.M."/>
            <person name="Bohm S."/>
            <person name="Ploscher M."/>
            <person name="Eichacker L."/>
            <person name="Bubenzer C."/>
            <person name="Scheer H."/>
            <person name="Wang X."/>
            <person name="Zhou M."/>
        </authorList>
    </citation>
    <scope>FUNCTION AS A CHROMOPHORE LYASE</scope>
    <scope>INDUCTION</scope>
    <source>
        <strain>PCC 7120 / SAG 25.82 / UTEX 2576</strain>
    </source>
</reference>
<reference key="3">
    <citation type="journal article" date="2007" name="Proc. Natl. Acad. Sci. U.S.A.">
        <title>Phycobilin:cystein-84 biliprotein lyase, a near-universal lyase for cysteine-84-binding sites in cyanobacterial phycobiliproteins.</title>
        <authorList>
            <person name="Zhao K.H."/>
            <person name="Su P."/>
            <person name="Tu J.M."/>
            <person name="Wang X."/>
            <person name="Liu H."/>
            <person name="Ploscher M."/>
            <person name="Eichacker L."/>
            <person name="Yang B."/>
            <person name="Zhou M."/>
            <person name="Scheer H."/>
        </authorList>
    </citation>
    <scope>SUBSTRATE SPECIFICITY</scope>
    <source>
        <strain>PCC 7120 / SAG 25.82 / UTEX 2576</strain>
    </source>
</reference>
<gene>
    <name type="primary">cpcT1</name>
    <name type="synonym">cpeT1</name>
    <name type="ordered locus">all5339</name>
</gene>
<evidence type="ECO:0000269" key="1">
    <source>
    </source>
</evidence>
<evidence type="ECO:0000305" key="2"/>
<evidence type="ECO:0007829" key="3">
    <source>
        <dbReference type="PDB" id="4O4O"/>
    </source>
</evidence>